<sequence>MRKKSLTLLSDGYLFRKENTIYFENARGKKPLAIEGIYDIYIYGKVSISSQALHYLAQKGIALHFFNHYGYYDGSFYPRESLHSGYLVVNQVEHYLDKDKRLELAKLFIIGGIKNMEWNLLKFKNKTKFSSYIEELNNCNKITEVMNVEGRVRTEYYRLWDETLPDDFKIVKRTRRPPKNEMNALISFLNSRLYPAIITELYNTQLTPTVSYLHEPHERRFSLALDLSEIFKPMIADRLANRLVKQGIIQKKHFRDDLNGVLLNKEGMKVVLEHFNKEMDKTVNHKKLKKNVSKRRLIRLEAYKLVKHLVGQKRYEPLVAWF</sequence>
<dbReference type="EC" id="3.1.-.-" evidence="1"/>
<dbReference type="EMBL" id="L77117">
    <property type="protein sequence ID" value="AAB98367.1"/>
    <property type="molecule type" value="Genomic_DNA"/>
</dbReference>
<dbReference type="PIR" id="B64347">
    <property type="entry name" value="B64347"/>
</dbReference>
<dbReference type="RefSeq" id="WP_010869877.1">
    <property type="nucleotide sequence ID" value="NC_000909.1"/>
</dbReference>
<dbReference type="SMR" id="Q57823"/>
<dbReference type="STRING" id="243232.MJ_0378"/>
<dbReference type="PaxDb" id="243232-MJ_0378"/>
<dbReference type="EnsemblBacteria" id="AAB98367">
    <property type="protein sequence ID" value="AAB98367"/>
    <property type="gene ID" value="MJ_0378"/>
</dbReference>
<dbReference type="GeneID" id="1451235"/>
<dbReference type="KEGG" id="mja:MJ_0378"/>
<dbReference type="eggNOG" id="arCOG01452">
    <property type="taxonomic scope" value="Archaea"/>
</dbReference>
<dbReference type="HOGENOM" id="CLU_052779_2_0_2"/>
<dbReference type="InParanoid" id="Q57823"/>
<dbReference type="OrthoDB" id="2216at2157"/>
<dbReference type="PhylomeDB" id="Q57823"/>
<dbReference type="Proteomes" id="UP000000805">
    <property type="component" value="Chromosome"/>
</dbReference>
<dbReference type="GO" id="GO:0003677">
    <property type="term" value="F:DNA binding"/>
    <property type="evidence" value="ECO:0007669"/>
    <property type="project" value="UniProtKB-KW"/>
</dbReference>
<dbReference type="GO" id="GO:0004520">
    <property type="term" value="F:DNA endonuclease activity"/>
    <property type="evidence" value="ECO:0007669"/>
    <property type="project" value="InterPro"/>
</dbReference>
<dbReference type="GO" id="GO:0046872">
    <property type="term" value="F:metal ion binding"/>
    <property type="evidence" value="ECO:0007669"/>
    <property type="project" value="UniProtKB-UniRule"/>
</dbReference>
<dbReference type="GO" id="GO:0051607">
    <property type="term" value="P:defense response to virus"/>
    <property type="evidence" value="ECO:0007669"/>
    <property type="project" value="UniProtKB-UniRule"/>
</dbReference>
<dbReference type="GO" id="GO:0043571">
    <property type="term" value="P:maintenance of CRISPR repeat elements"/>
    <property type="evidence" value="ECO:0007669"/>
    <property type="project" value="UniProtKB-UniRule"/>
</dbReference>
<dbReference type="CDD" id="cd09722">
    <property type="entry name" value="Cas1_I-B"/>
    <property type="match status" value="1"/>
</dbReference>
<dbReference type="Gene3D" id="1.20.120.920">
    <property type="entry name" value="CRISPR-associated endonuclease Cas1, C-terminal domain"/>
    <property type="match status" value="1"/>
</dbReference>
<dbReference type="Gene3D" id="3.100.10.20">
    <property type="entry name" value="CRISPR-associated endonuclease Cas1, N-terminal domain"/>
    <property type="match status" value="1"/>
</dbReference>
<dbReference type="HAMAP" id="MF_01470">
    <property type="entry name" value="Cas1"/>
    <property type="match status" value="1"/>
</dbReference>
<dbReference type="InterPro" id="IPR002729">
    <property type="entry name" value="CRISPR-assoc_Cas1"/>
</dbReference>
<dbReference type="InterPro" id="IPR042206">
    <property type="entry name" value="CRISPR-assoc_Cas1_C"/>
</dbReference>
<dbReference type="InterPro" id="IPR019858">
    <property type="entry name" value="CRISPR-assoc_Cas1_HMARI/TNEAP"/>
</dbReference>
<dbReference type="InterPro" id="IPR042211">
    <property type="entry name" value="CRISPR-assoc_Cas1_N"/>
</dbReference>
<dbReference type="NCBIfam" id="TIGR00287">
    <property type="entry name" value="cas1"/>
    <property type="match status" value="1"/>
</dbReference>
<dbReference type="NCBIfam" id="TIGR03641">
    <property type="entry name" value="cas1_HMARI"/>
    <property type="match status" value="1"/>
</dbReference>
<dbReference type="PANTHER" id="PTHR43219">
    <property type="entry name" value="CRISPR-ASSOCIATED ENDONUCLEASE CAS1"/>
    <property type="match status" value="1"/>
</dbReference>
<dbReference type="PANTHER" id="PTHR43219:SF2">
    <property type="entry name" value="CRISPR-ASSOCIATED ENDONUCLEASE CAS1"/>
    <property type="match status" value="1"/>
</dbReference>
<dbReference type="Pfam" id="PF01867">
    <property type="entry name" value="Cas_Cas1"/>
    <property type="match status" value="1"/>
</dbReference>
<evidence type="ECO:0000255" key="1">
    <source>
        <dbReference type="HAMAP-Rule" id="MF_01470"/>
    </source>
</evidence>
<reference key="1">
    <citation type="journal article" date="1996" name="Science">
        <title>Complete genome sequence of the methanogenic archaeon, Methanococcus jannaschii.</title>
        <authorList>
            <person name="Bult C.J."/>
            <person name="White O."/>
            <person name="Olsen G.J."/>
            <person name="Zhou L."/>
            <person name="Fleischmann R.D."/>
            <person name="Sutton G.G."/>
            <person name="Blake J.A."/>
            <person name="FitzGerald L.M."/>
            <person name="Clayton R.A."/>
            <person name="Gocayne J.D."/>
            <person name="Kerlavage A.R."/>
            <person name="Dougherty B.A."/>
            <person name="Tomb J.-F."/>
            <person name="Adams M.D."/>
            <person name="Reich C.I."/>
            <person name="Overbeek R."/>
            <person name="Kirkness E.F."/>
            <person name="Weinstock K.G."/>
            <person name="Merrick J.M."/>
            <person name="Glodek A."/>
            <person name="Scott J.L."/>
            <person name="Geoghagen N.S.M."/>
            <person name="Weidman J.F."/>
            <person name="Fuhrmann J.L."/>
            <person name="Nguyen D."/>
            <person name="Utterback T.R."/>
            <person name="Kelley J.M."/>
            <person name="Peterson J.D."/>
            <person name="Sadow P.W."/>
            <person name="Hanna M.C."/>
            <person name="Cotton M.D."/>
            <person name="Roberts K.M."/>
            <person name="Hurst M.A."/>
            <person name="Kaine B.P."/>
            <person name="Borodovsky M."/>
            <person name="Klenk H.-P."/>
            <person name="Fraser C.M."/>
            <person name="Smith H.O."/>
            <person name="Woese C.R."/>
            <person name="Venter J.C."/>
        </authorList>
    </citation>
    <scope>NUCLEOTIDE SEQUENCE [LARGE SCALE GENOMIC DNA]</scope>
    <source>
        <strain>ATCC 43067 / DSM 2661 / JAL-1 / JCM 10045 / NBRC 100440</strain>
    </source>
</reference>
<feature type="chain" id="PRO_0000106841" description="CRISPR-associated endonuclease Cas1">
    <location>
        <begin position="1"/>
        <end position="322"/>
    </location>
</feature>
<feature type="binding site" evidence="1">
    <location>
        <position position="149"/>
    </location>
    <ligand>
        <name>Mn(2+)</name>
        <dbReference type="ChEBI" id="CHEBI:29035"/>
    </ligand>
</feature>
<feature type="binding site" evidence="1">
    <location>
        <position position="214"/>
    </location>
    <ligand>
        <name>Mn(2+)</name>
        <dbReference type="ChEBI" id="CHEBI:29035"/>
    </ligand>
</feature>
<feature type="binding site" evidence="1">
    <location>
        <position position="229"/>
    </location>
    <ligand>
        <name>Mn(2+)</name>
        <dbReference type="ChEBI" id="CHEBI:29035"/>
    </ligand>
</feature>
<protein>
    <recommendedName>
        <fullName evidence="1">CRISPR-associated endonuclease Cas1</fullName>
        <ecNumber evidence="1">3.1.-.-</ecNumber>
    </recommendedName>
</protein>
<accession>Q57823</accession>
<proteinExistence type="inferred from homology"/>
<organism>
    <name type="scientific">Methanocaldococcus jannaschii (strain ATCC 43067 / DSM 2661 / JAL-1 / JCM 10045 / NBRC 100440)</name>
    <name type="common">Methanococcus jannaschii</name>
    <dbReference type="NCBI Taxonomy" id="243232"/>
    <lineage>
        <taxon>Archaea</taxon>
        <taxon>Methanobacteriati</taxon>
        <taxon>Methanobacteriota</taxon>
        <taxon>Methanomada group</taxon>
        <taxon>Methanococci</taxon>
        <taxon>Methanococcales</taxon>
        <taxon>Methanocaldococcaceae</taxon>
        <taxon>Methanocaldococcus</taxon>
    </lineage>
</organism>
<keyword id="KW-0051">Antiviral defense</keyword>
<keyword id="KW-0238">DNA-binding</keyword>
<keyword id="KW-0255">Endonuclease</keyword>
<keyword id="KW-0378">Hydrolase</keyword>
<keyword id="KW-0460">Magnesium</keyword>
<keyword id="KW-0464">Manganese</keyword>
<keyword id="KW-0479">Metal-binding</keyword>
<keyword id="KW-0540">Nuclease</keyword>
<keyword id="KW-1185">Reference proteome</keyword>
<name>CAS1_METJA</name>
<gene>
    <name evidence="1" type="primary">cas1</name>
    <name type="ordered locus">MJ0378</name>
</gene>
<comment type="function">
    <text evidence="1">CRISPR (clustered regularly interspaced short palindromic repeat), is an adaptive immune system that provides protection against mobile genetic elements (viruses, transposable elements and conjugative plasmids). CRISPR clusters contain spacers, sequences complementary to antecedent mobile elements, and target invading nucleic acids. CRISPR clusters are transcribed and processed into CRISPR RNA (crRNA). Acts as a dsDNA endonuclease. Involved in the integration of spacer DNA into the CRISPR cassette.</text>
</comment>
<comment type="cofactor">
    <cofactor evidence="1">
        <name>Mg(2+)</name>
        <dbReference type="ChEBI" id="CHEBI:18420"/>
    </cofactor>
    <cofactor evidence="1">
        <name>Mn(2+)</name>
        <dbReference type="ChEBI" id="CHEBI:29035"/>
    </cofactor>
</comment>
<comment type="subunit">
    <text evidence="1">Homodimer, forms a heterotetramer with a Cas2 homodimer.</text>
</comment>
<comment type="similarity">
    <text evidence="1">Belongs to the CRISPR-associated endonuclease Cas1 family.</text>
</comment>